<reference key="1">
    <citation type="submission" date="2007-10" db="EMBL/GenBank/DDBJ databases">
        <title>Complete sequence of chromosome 1 of Burkholderia multivorans ATCC 17616.</title>
        <authorList>
            <person name="Copeland A."/>
            <person name="Lucas S."/>
            <person name="Lapidus A."/>
            <person name="Barry K."/>
            <person name="Glavina del Rio T."/>
            <person name="Dalin E."/>
            <person name="Tice H."/>
            <person name="Pitluck S."/>
            <person name="Chain P."/>
            <person name="Malfatti S."/>
            <person name="Shin M."/>
            <person name="Vergez L."/>
            <person name="Schmutz J."/>
            <person name="Larimer F."/>
            <person name="Land M."/>
            <person name="Hauser L."/>
            <person name="Kyrpides N."/>
            <person name="Kim E."/>
            <person name="Tiedje J."/>
            <person name="Richardson P."/>
        </authorList>
    </citation>
    <scope>NUCLEOTIDE SEQUENCE [LARGE SCALE GENOMIC DNA]</scope>
    <source>
        <strain>ATCC 17616 / 249</strain>
    </source>
</reference>
<reference key="2">
    <citation type="submission" date="2007-04" db="EMBL/GenBank/DDBJ databases">
        <title>Complete genome sequence of Burkholderia multivorans ATCC 17616.</title>
        <authorList>
            <person name="Ohtsubo Y."/>
            <person name="Yamashita A."/>
            <person name="Kurokawa K."/>
            <person name="Takami H."/>
            <person name="Yuhara S."/>
            <person name="Nishiyama E."/>
            <person name="Endo R."/>
            <person name="Miyazaki R."/>
            <person name="Ono A."/>
            <person name="Yano K."/>
            <person name="Ito M."/>
            <person name="Sota M."/>
            <person name="Yuji N."/>
            <person name="Hattori M."/>
            <person name="Tsuda M."/>
        </authorList>
    </citation>
    <scope>NUCLEOTIDE SEQUENCE [LARGE SCALE GENOMIC DNA]</scope>
    <source>
        <strain>ATCC 17616 / 249</strain>
    </source>
</reference>
<gene>
    <name evidence="1" type="primary">coaX</name>
    <name type="ordered locus">Bmul_0399</name>
    <name type="ordered locus">BMULJ_02855</name>
</gene>
<dbReference type="EC" id="2.7.1.33" evidence="1"/>
<dbReference type="EMBL" id="CP000868">
    <property type="protein sequence ID" value="ABX14094.1"/>
    <property type="molecule type" value="Genomic_DNA"/>
</dbReference>
<dbReference type="EMBL" id="AP009385">
    <property type="protein sequence ID" value="BAG44743.1"/>
    <property type="molecule type" value="Genomic_DNA"/>
</dbReference>
<dbReference type="RefSeq" id="WP_006412278.1">
    <property type="nucleotide sequence ID" value="NC_010084.1"/>
</dbReference>
<dbReference type="SMR" id="A9AEF0"/>
<dbReference type="STRING" id="395019.BMULJ_02855"/>
<dbReference type="KEGG" id="bmj:BMULJ_02855"/>
<dbReference type="KEGG" id="bmu:Bmul_0399"/>
<dbReference type="eggNOG" id="COG1521">
    <property type="taxonomic scope" value="Bacteria"/>
</dbReference>
<dbReference type="HOGENOM" id="CLU_066627_0_0_4"/>
<dbReference type="UniPathway" id="UPA00241">
    <property type="reaction ID" value="UER00352"/>
</dbReference>
<dbReference type="Proteomes" id="UP000008815">
    <property type="component" value="Chromosome 1"/>
</dbReference>
<dbReference type="GO" id="GO:0005737">
    <property type="term" value="C:cytoplasm"/>
    <property type="evidence" value="ECO:0007669"/>
    <property type="project" value="UniProtKB-SubCell"/>
</dbReference>
<dbReference type="GO" id="GO:0005524">
    <property type="term" value="F:ATP binding"/>
    <property type="evidence" value="ECO:0007669"/>
    <property type="project" value="UniProtKB-UniRule"/>
</dbReference>
<dbReference type="GO" id="GO:0004594">
    <property type="term" value="F:pantothenate kinase activity"/>
    <property type="evidence" value="ECO:0007669"/>
    <property type="project" value="UniProtKB-UniRule"/>
</dbReference>
<dbReference type="GO" id="GO:0015937">
    <property type="term" value="P:coenzyme A biosynthetic process"/>
    <property type="evidence" value="ECO:0007669"/>
    <property type="project" value="UniProtKB-UniRule"/>
</dbReference>
<dbReference type="CDD" id="cd24015">
    <property type="entry name" value="ASKHA_NBD_PanK-III"/>
    <property type="match status" value="1"/>
</dbReference>
<dbReference type="Gene3D" id="3.30.420.40">
    <property type="match status" value="2"/>
</dbReference>
<dbReference type="HAMAP" id="MF_01274">
    <property type="entry name" value="Pantothen_kinase_3"/>
    <property type="match status" value="1"/>
</dbReference>
<dbReference type="InterPro" id="IPR043129">
    <property type="entry name" value="ATPase_NBD"/>
</dbReference>
<dbReference type="InterPro" id="IPR004619">
    <property type="entry name" value="Type_III_PanK"/>
</dbReference>
<dbReference type="NCBIfam" id="TIGR00671">
    <property type="entry name" value="baf"/>
    <property type="match status" value="1"/>
</dbReference>
<dbReference type="NCBIfam" id="NF009868">
    <property type="entry name" value="PRK13328.1-4"/>
    <property type="match status" value="1"/>
</dbReference>
<dbReference type="PANTHER" id="PTHR34265">
    <property type="entry name" value="TYPE III PANTOTHENATE KINASE"/>
    <property type="match status" value="1"/>
</dbReference>
<dbReference type="PANTHER" id="PTHR34265:SF1">
    <property type="entry name" value="TYPE III PANTOTHENATE KINASE"/>
    <property type="match status" value="1"/>
</dbReference>
<dbReference type="Pfam" id="PF03309">
    <property type="entry name" value="Pan_kinase"/>
    <property type="match status" value="1"/>
</dbReference>
<dbReference type="SUPFAM" id="SSF53067">
    <property type="entry name" value="Actin-like ATPase domain"/>
    <property type="match status" value="2"/>
</dbReference>
<sequence length="262" mass="27617">MSEPHLLIDAGNSRIKWALADAQRTLVRTGAFGHTRDGGADPDWADLPRPRGAWISNVAGADVGARLDALLDTRWPGLPRTTIRSRPAQCGVTNGYTTPEQLGSDRWAGLIGARAAFPDEHLLIATFGTATTLEALRADGRFTGGLIAPGWALMMRALGTHTAQLPTLTTDIASGLLADAQAQPFQVDTPRSLSAGCLYAQAGLIERAWRDLAAAWQAPVRLVLAGGAADEIARALTLPHTRHDALILSGLALIAAEASAQD</sequence>
<keyword id="KW-0067">ATP-binding</keyword>
<keyword id="KW-0173">Coenzyme A biosynthesis</keyword>
<keyword id="KW-0963">Cytoplasm</keyword>
<keyword id="KW-0418">Kinase</keyword>
<keyword id="KW-0547">Nucleotide-binding</keyword>
<keyword id="KW-0630">Potassium</keyword>
<keyword id="KW-1185">Reference proteome</keyword>
<keyword id="KW-0808">Transferase</keyword>
<comment type="function">
    <text evidence="1">Catalyzes the phosphorylation of pantothenate (Pan), the first step in CoA biosynthesis.</text>
</comment>
<comment type="catalytic activity">
    <reaction evidence="1">
        <text>(R)-pantothenate + ATP = (R)-4'-phosphopantothenate + ADP + H(+)</text>
        <dbReference type="Rhea" id="RHEA:16373"/>
        <dbReference type="ChEBI" id="CHEBI:10986"/>
        <dbReference type="ChEBI" id="CHEBI:15378"/>
        <dbReference type="ChEBI" id="CHEBI:29032"/>
        <dbReference type="ChEBI" id="CHEBI:30616"/>
        <dbReference type="ChEBI" id="CHEBI:456216"/>
        <dbReference type="EC" id="2.7.1.33"/>
    </reaction>
</comment>
<comment type="cofactor">
    <cofactor evidence="1">
        <name>NH4(+)</name>
        <dbReference type="ChEBI" id="CHEBI:28938"/>
    </cofactor>
    <cofactor evidence="1">
        <name>K(+)</name>
        <dbReference type="ChEBI" id="CHEBI:29103"/>
    </cofactor>
    <text evidence="1">A monovalent cation. Ammonium or potassium.</text>
</comment>
<comment type="pathway">
    <text evidence="1">Cofactor biosynthesis; coenzyme A biosynthesis; CoA from (R)-pantothenate: step 1/5.</text>
</comment>
<comment type="subunit">
    <text evidence="1">Homodimer.</text>
</comment>
<comment type="subcellular location">
    <subcellularLocation>
        <location evidence="1">Cytoplasm</location>
    </subcellularLocation>
</comment>
<comment type="similarity">
    <text evidence="1">Belongs to the type III pantothenate kinase family.</text>
</comment>
<evidence type="ECO:0000255" key="1">
    <source>
        <dbReference type="HAMAP-Rule" id="MF_01274"/>
    </source>
</evidence>
<name>COAX_BURM1</name>
<organism>
    <name type="scientific">Burkholderia multivorans (strain ATCC 17616 / 249)</name>
    <dbReference type="NCBI Taxonomy" id="395019"/>
    <lineage>
        <taxon>Bacteria</taxon>
        <taxon>Pseudomonadati</taxon>
        <taxon>Pseudomonadota</taxon>
        <taxon>Betaproteobacteria</taxon>
        <taxon>Burkholderiales</taxon>
        <taxon>Burkholderiaceae</taxon>
        <taxon>Burkholderia</taxon>
        <taxon>Burkholderia cepacia complex</taxon>
    </lineage>
</organism>
<proteinExistence type="inferred from homology"/>
<feature type="chain" id="PRO_1000140228" description="Type III pantothenate kinase">
    <location>
        <begin position="1"/>
        <end position="262"/>
    </location>
</feature>
<feature type="active site" description="Proton acceptor" evidence="1">
    <location>
        <position position="105"/>
    </location>
</feature>
<feature type="binding site" evidence="1">
    <location>
        <begin position="9"/>
        <end position="16"/>
    </location>
    <ligand>
        <name>ATP</name>
        <dbReference type="ChEBI" id="CHEBI:30616"/>
    </ligand>
</feature>
<feature type="binding site" evidence="1">
    <location>
        <position position="96"/>
    </location>
    <ligand>
        <name>substrate</name>
    </ligand>
</feature>
<feature type="binding site" evidence="1">
    <location>
        <begin position="103"/>
        <end position="106"/>
    </location>
    <ligand>
        <name>substrate</name>
    </ligand>
</feature>
<feature type="binding site" evidence="1">
    <location>
        <position position="129"/>
    </location>
    <ligand>
        <name>ATP</name>
        <dbReference type="ChEBI" id="CHEBI:30616"/>
    </ligand>
</feature>
<feature type="binding site" evidence="1">
    <location>
        <position position="189"/>
    </location>
    <ligand>
        <name>substrate</name>
    </ligand>
</feature>
<accession>A9AEF0</accession>
<protein>
    <recommendedName>
        <fullName evidence="1">Type III pantothenate kinase</fullName>
        <ecNumber evidence="1">2.7.1.33</ecNumber>
    </recommendedName>
    <alternativeName>
        <fullName evidence="1">PanK-III</fullName>
    </alternativeName>
    <alternativeName>
        <fullName evidence="1">Pantothenic acid kinase</fullName>
    </alternativeName>
</protein>